<gene>
    <name evidence="1" type="primary">pth</name>
    <name type="ordered locus">Bpet4000</name>
</gene>
<reference key="1">
    <citation type="journal article" date="2008" name="BMC Genomics">
        <title>The missing link: Bordetella petrii is endowed with both the metabolic versatility of environmental bacteria and virulence traits of pathogenic Bordetellae.</title>
        <authorList>
            <person name="Gross R."/>
            <person name="Guzman C.A."/>
            <person name="Sebaihia M."/>
            <person name="Martin dos Santos V.A.P."/>
            <person name="Pieper D.H."/>
            <person name="Koebnik R."/>
            <person name="Lechner M."/>
            <person name="Bartels D."/>
            <person name="Buhrmester J."/>
            <person name="Choudhuri J.V."/>
            <person name="Ebensen T."/>
            <person name="Gaigalat L."/>
            <person name="Herrmann S."/>
            <person name="Khachane A.N."/>
            <person name="Larisch C."/>
            <person name="Link S."/>
            <person name="Linke B."/>
            <person name="Meyer F."/>
            <person name="Mormann S."/>
            <person name="Nakunst D."/>
            <person name="Rueckert C."/>
            <person name="Schneiker-Bekel S."/>
            <person name="Schulze K."/>
            <person name="Voerholter F.-J."/>
            <person name="Yevsa T."/>
            <person name="Engle J.T."/>
            <person name="Goldman W.E."/>
            <person name="Puehler A."/>
            <person name="Goebel U.B."/>
            <person name="Goesmann A."/>
            <person name="Bloecker H."/>
            <person name="Kaiser O."/>
            <person name="Martinez-Arias R."/>
        </authorList>
    </citation>
    <scope>NUCLEOTIDE SEQUENCE [LARGE SCALE GENOMIC DNA]</scope>
    <source>
        <strain>ATCC BAA-461 / DSM 12804 / CCUG 43448</strain>
    </source>
</reference>
<feature type="chain" id="PRO_1000092913" description="Peptidyl-tRNA hydrolase">
    <location>
        <begin position="1"/>
        <end position="210"/>
    </location>
</feature>
<feature type="active site" description="Proton acceptor" evidence="1">
    <location>
        <position position="35"/>
    </location>
</feature>
<feature type="binding site" evidence="1">
    <location>
        <position position="30"/>
    </location>
    <ligand>
        <name>tRNA</name>
        <dbReference type="ChEBI" id="CHEBI:17843"/>
    </ligand>
</feature>
<feature type="binding site" evidence="1">
    <location>
        <position position="81"/>
    </location>
    <ligand>
        <name>tRNA</name>
        <dbReference type="ChEBI" id="CHEBI:17843"/>
    </ligand>
</feature>
<feature type="binding site" evidence="1">
    <location>
        <position position="83"/>
    </location>
    <ligand>
        <name>tRNA</name>
        <dbReference type="ChEBI" id="CHEBI:17843"/>
    </ligand>
</feature>
<feature type="binding site" evidence="1">
    <location>
        <position position="129"/>
    </location>
    <ligand>
        <name>tRNA</name>
        <dbReference type="ChEBI" id="CHEBI:17843"/>
    </ligand>
</feature>
<feature type="site" description="Discriminates between blocked and unblocked aminoacyl-tRNA" evidence="1">
    <location>
        <position position="25"/>
    </location>
</feature>
<feature type="site" description="Stabilizes the basic form of H active site to accept a proton" evidence="1">
    <location>
        <position position="108"/>
    </location>
</feature>
<name>PTH_BORPD</name>
<organism>
    <name type="scientific">Bordetella petrii (strain ATCC BAA-461 / DSM 12804 / CCUG 43448)</name>
    <dbReference type="NCBI Taxonomy" id="340100"/>
    <lineage>
        <taxon>Bacteria</taxon>
        <taxon>Pseudomonadati</taxon>
        <taxon>Pseudomonadota</taxon>
        <taxon>Betaproteobacteria</taxon>
        <taxon>Burkholderiales</taxon>
        <taxon>Alcaligenaceae</taxon>
        <taxon>Bordetella</taxon>
    </lineage>
</organism>
<dbReference type="EC" id="3.1.1.29" evidence="1"/>
<dbReference type="EMBL" id="AM902716">
    <property type="protein sequence ID" value="CAP44348.1"/>
    <property type="molecule type" value="Genomic_DNA"/>
</dbReference>
<dbReference type="SMR" id="A9I6W1"/>
<dbReference type="STRING" id="94624.Bpet4000"/>
<dbReference type="KEGG" id="bpt:Bpet4000"/>
<dbReference type="eggNOG" id="COG0193">
    <property type="taxonomic scope" value="Bacteria"/>
</dbReference>
<dbReference type="Proteomes" id="UP000001225">
    <property type="component" value="Chromosome"/>
</dbReference>
<dbReference type="GO" id="GO:0005737">
    <property type="term" value="C:cytoplasm"/>
    <property type="evidence" value="ECO:0007669"/>
    <property type="project" value="UniProtKB-SubCell"/>
</dbReference>
<dbReference type="GO" id="GO:0004045">
    <property type="term" value="F:peptidyl-tRNA hydrolase activity"/>
    <property type="evidence" value="ECO:0007669"/>
    <property type="project" value="UniProtKB-UniRule"/>
</dbReference>
<dbReference type="GO" id="GO:0000049">
    <property type="term" value="F:tRNA binding"/>
    <property type="evidence" value="ECO:0007669"/>
    <property type="project" value="UniProtKB-UniRule"/>
</dbReference>
<dbReference type="GO" id="GO:0006515">
    <property type="term" value="P:protein quality control for misfolded or incompletely synthesized proteins"/>
    <property type="evidence" value="ECO:0007669"/>
    <property type="project" value="UniProtKB-UniRule"/>
</dbReference>
<dbReference type="GO" id="GO:0072344">
    <property type="term" value="P:rescue of stalled ribosome"/>
    <property type="evidence" value="ECO:0007669"/>
    <property type="project" value="UniProtKB-UniRule"/>
</dbReference>
<dbReference type="CDD" id="cd00462">
    <property type="entry name" value="PTH"/>
    <property type="match status" value="1"/>
</dbReference>
<dbReference type="FunFam" id="3.40.50.1470:FF:000001">
    <property type="entry name" value="Peptidyl-tRNA hydrolase"/>
    <property type="match status" value="1"/>
</dbReference>
<dbReference type="Gene3D" id="3.40.50.1470">
    <property type="entry name" value="Peptidyl-tRNA hydrolase"/>
    <property type="match status" value="1"/>
</dbReference>
<dbReference type="HAMAP" id="MF_00083">
    <property type="entry name" value="Pept_tRNA_hydro_bact"/>
    <property type="match status" value="1"/>
</dbReference>
<dbReference type="InterPro" id="IPR001328">
    <property type="entry name" value="Pept_tRNA_hydro"/>
</dbReference>
<dbReference type="InterPro" id="IPR018171">
    <property type="entry name" value="Pept_tRNA_hydro_CS"/>
</dbReference>
<dbReference type="InterPro" id="IPR036416">
    <property type="entry name" value="Pept_tRNA_hydro_sf"/>
</dbReference>
<dbReference type="NCBIfam" id="TIGR00447">
    <property type="entry name" value="pth"/>
    <property type="match status" value="1"/>
</dbReference>
<dbReference type="PANTHER" id="PTHR17224">
    <property type="entry name" value="PEPTIDYL-TRNA HYDROLASE"/>
    <property type="match status" value="1"/>
</dbReference>
<dbReference type="PANTHER" id="PTHR17224:SF1">
    <property type="entry name" value="PEPTIDYL-TRNA HYDROLASE"/>
    <property type="match status" value="1"/>
</dbReference>
<dbReference type="Pfam" id="PF01195">
    <property type="entry name" value="Pept_tRNA_hydro"/>
    <property type="match status" value="1"/>
</dbReference>
<dbReference type="SUPFAM" id="SSF53178">
    <property type="entry name" value="Peptidyl-tRNA hydrolase-like"/>
    <property type="match status" value="1"/>
</dbReference>
<dbReference type="PROSITE" id="PS01195">
    <property type="entry name" value="PEPT_TRNA_HYDROL_1"/>
    <property type="match status" value="1"/>
</dbReference>
<dbReference type="PROSITE" id="PS01196">
    <property type="entry name" value="PEPT_TRNA_HYDROL_2"/>
    <property type="match status" value="1"/>
</dbReference>
<sequence length="210" mass="22988">MRRVFCVLYMPIMSTAIRLIAGLGNPGPDYETTRHNAGFWLADHLADDLRATFALEKSFFGMVAKARHAGENVLLVKPITYMNRSGQAVGALARFYKLAPEQVLVLHDELDLLPGQVKLKQGGGHAGHNGLKDIQAALGSPNFWRLRIGIGHPRTLGLAQQVADFVLHPPRRDEQTAIDDVIHRCRAVVPAMLDGDFALATRQLHSGNGA</sequence>
<evidence type="ECO:0000255" key="1">
    <source>
        <dbReference type="HAMAP-Rule" id="MF_00083"/>
    </source>
</evidence>
<accession>A9I6W1</accession>
<protein>
    <recommendedName>
        <fullName evidence="1">Peptidyl-tRNA hydrolase</fullName>
        <shortName evidence="1">Pth</shortName>
        <ecNumber evidence="1">3.1.1.29</ecNumber>
    </recommendedName>
</protein>
<keyword id="KW-0963">Cytoplasm</keyword>
<keyword id="KW-0378">Hydrolase</keyword>
<keyword id="KW-0694">RNA-binding</keyword>
<keyword id="KW-0820">tRNA-binding</keyword>
<comment type="function">
    <text evidence="1">Hydrolyzes ribosome-free peptidyl-tRNAs (with 1 or more amino acids incorporated), which drop off the ribosome during protein synthesis, or as a result of ribosome stalling.</text>
</comment>
<comment type="function">
    <text evidence="1">Catalyzes the release of premature peptidyl moieties from peptidyl-tRNA molecules trapped in stalled 50S ribosomal subunits, and thus maintains levels of free tRNAs and 50S ribosomes.</text>
</comment>
<comment type="catalytic activity">
    <reaction evidence="1">
        <text>an N-acyl-L-alpha-aminoacyl-tRNA + H2O = an N-acyl-L-amino acid + a tRNA + H(+)</text>
        <dbReference type="Rhea" id="RHEA:54448"/>
        <dbReference type="Rhea" id="RHEA-COMP:10123"/>
        <dbReference type="Rhea" id="RHEA-COMP:13883"/>
        <dbReference type="ChEBI" id="CHEBI:15377"/>
        <dbReference type="ChEBI" id="CHEBI:15378"/>
        <dbReference type="ChEBI" id="CHEBI:59874"/>
        <dbReference type="ChEBI" id="CHEBI:78442"/>
        <dbReference type="ChEBI" id="CHEBI:138191"/>
        <dbReference type="EC" id="3.1.1.29"/>
    </reaction>
</comment>
<comment type="subunit">
    <text evidence="1">Monomer.</text>
</comment>
<comment type="subcellular location">
    <subcellularLocation>
        <location evidence="1">Cytoplasm</location>
    </subcellularLocation>
</comment>
<comment type="similarity">
    <text evidence="1">Belongs to the PTH family.</text>
</comment>
<proteinExistence type="inferred from homology"/>